<feature type="chain" id="PRO_1000019369" description="Ferrochelatase">
    <location>
        <begin position="1"/>
        <end position="320"/>
    </location>
</feature>
<feature type="binding site" evidence="1">
    <location>
        <position position="194"/>
    </location>
    <ligand>
        <name>Fe cation</name>
        <dbReference type="ChEBI" id="CHEBI:24875"/>
    </ligand>
</feature>
<feature type="binding site" evidence="1">
    <location>
        <position position="275"/>
    </location>
    <ligand>
        <name>Fe cation</name>
        <dbReference type="ChEBI" id="CHEBI:24875"/>
    </ligand>
</feature>
<comment type="function">
    <text evidence="1">Catalyzes the ferrous insertion into protoporphyrin IX.</text>
</comment>
<comment type="catalytic activity">
    <reaction evidence="1">
        <text>heme b + 2 H(+) = protoporphyrin IX + Fe(2+)</text>
        <dbReference type="Rhea" id="RHEA:22584"/>
        <dbReference type="ChEBI" id="CHEBI:15378"/>
        <dbReference type="ChEBI" id="CHEBI:29033"/>
        <dbReference type="ChEBI" id="CHEBI:57306"/>
        <dbReference type="ChEBI" id="CHEBI:60344"/>
        <dbReference type="EC" id="4.98.1.1"/>
    </reaction>
</comment>
<comment type="pathway">
    <text evidence="1">Porphyrin-containing compound metabolism; protoheme biosynthesis; protoheme from protoporphyrin-IX: step 1/1.</text>
</comment>
<comment type="subunit">
    <text evidence="1">Monomer.</text>
</comment>
<comment type="subcellular location">
    <subcellularLocation>
        <location evidence="1">Cytoplasm</location>
    </subcellularLocation>
</comment>
<comment type="similarity">
    <text evidence="1">Belongs to the ferrochelatase family.</text>
</comment>
<protein>
    <recommendedName>
        <fullName evidence="1">Ferrochelatase</fullName>
        <ecNumber evidence="1">4.98.1.1</ecNumber>
    </recommendedName>
    <alternativeName>
        <fullName evidence="1">Heme synthase</fullName>
    </alternativeName>
    <alternativeName>
        <fullName evidence="1">Protoheme ferro-lyase</fullName>
    </alternativeName>
</protein>
<evidence type="ECO:0000255" key="1">
    <source>
        <dbReference type="HAMAP-Rule" id="MF_00323"/>
    </source>
</evidence>
<accession>Q32J55</accession>
<dbReference type="EC" id="4.98.1.1" evidence="1"/>
<dbReference type="EMBL" id="CP000034">
    <property type="protein sequence ID" value="ABB60652.1"/>
    <property type="molecule type" value="Genomic_DNA"/>
</dbReference>
<dbReference type="RefSeq" id="WP_001250132.1">
    <property type="nucleotide sequence ID" value="NC_007606.1"/>
</dbReference>
<dbReference type="RefSeq" id="YP_402141.1">
    <property type="nucleotide sequence ID" value="NC_007606.1"/>
</dbReference>
<dbReference type="SMR" id="Q32J55"/>
<dbReference type="STRING" id="300267.SDY_0444"/>
<dbReference type="EnsemblBacteria" id="ABB60652">
    <property type="protein sequence ID" value="ABB60652"/>
    <property type="gene ID" value="SDY_0444"/>
</dbReference>
<dbReference type="KEGG" id="sdy:SDY_0444"/>
<dbReference type="PATRIC" id="fig|300267.13.peg.527"/>
<dbReference type="HOGENOM" id="CLU_018884_0_0_6"/>
<dbReference type="UniPathway" id="UPA00252">
    <property type="reaction ID" value="UER00325"/>
</dbReference>
<dbReference type="Proteomes" id="UP000002716">
    <property type="component" value="Chromosome"/>
</dbReference>
<dbReference type="GO" id="GO:0005737">
    <property type="term" value="C:cytoplasm"/>
    <property type="evidence" value="ECO:0007669"/>
    <property type="project" value="UniProtKB-SubCell"/>
</dbReference>
<dbReference type="GO" id="GO:0004325">
    <property type="term" value="F:ferrochelatase activity"/>
    <property type="evidence" value="ECO:0007669"/>
    <property type="project" value="UniProtKB-UniRule"/>
</dbReference>
<dbReference type="GO" id="GO:0046872">
    <property type="term" value="F:metal ion binding"/>
    <property type="evidence" value="ECO:0007669"/>
    <property type="project" value="UniProtKB-KW"/>
</dbReference>
<dbReference type="GO" id="GO:0006783">
    <property type="term" value="P:heme biosynthetic process"/>
    <property type="evidence" value="ECO:0007669"/>
    <property type="project" value="UniProtKB-UniRule"/>
</dbReference>
<dbReference type="CDD" id="cd00419">
    <property type="entry name" value="Ferrochelatase_C"/>
    <property type="match status" value="1"/>
</dbReference>
<dbReference type="CDD" id="cd03411">
    <property type="entry name" value="Ferrochelatase_N"/>
    <property type="match status" value="1"/>
</dbReference>
<dbReference type="FunFam" id="3.40.50.1400:FF:000004">
    <property type="entry name" value="Ferrochelatase"/>
    <property type="match status" value="1"/>
</dbReference>
<dbReference type="Gene3D" id="3.40.50.1400">
    <property type="match status" value="2"/>
</dbReference>
<dbReference type="HAMAP" id="MF_00323">
    <property type="entry name" value="Ferrochelatase"/>
    <property type="match status" value="1"/>
</dbReference>
<dbReference type="InterPro" id="IPR001015">
    <property type="entry name" value="Ferrochelatase"/>
</dbReference>
<dbReference type="InterPro" id="IPR019772">
    <property type="entry name" value="Ferrochelatase_AS"/>
</dbReference>
<dbReference type="InterPro" id="IPR033644">
    <property type="entry name" value="Ferrochelatase_C"/>
</dbReference>
<dbReference type="InterPro" id="IPR033659">
    <property type="entry name" value="Ferrochelatase_N"/>
</dbReference>
<dbReference type="NCBIfam" id="TIGR00109">
    <property type="entry name" value="hemH"/>
    <property type="match status" value="1"/>
</dbReference>
<dbReference type="PANTHER" id="PTHR11108">
    <property type="entry name" value="FERROCHELATASE"/>
    <property type="match status" value="1"/>
</dbReference>
<dbReference type="PANTHER" id="PTHR11108:SF1">
    <property type="entry name" value="FERROCHELATASE, MITOCHONDRIAL"/>
    <property type="match status" value="1"/>
</dbReference>
<dbReference type="Pfam" id="PF00762">
    <property type="entry name" value="Ferrochelatase"/>
    <property type="match status" value="1"/>
</dbReference>
<dbReference type="SUPFAM" id="SSF53800">
    <property type="entry name" value="Chelatase"/>
    <property type="match status" value="1"/>
</dbReference>
<dbReference type="PROSITE" id="PS00534">
    <property type="entry name" value="FERROCHELATASE"/>
    <property type="match status" value="1"/>
</dbReference>
<keyword id="KW-0963">Cytoplasm</keyword>
<keyword id="KW-0350">Heme biosynthesis</keyword>
<keyword id="KW-0408">Iron</keyword>
<keyword id="KW-0456">Lyase</keyword>
<keyword id="KW-0479">Metal-binding</keyword>
<keyword id="KW-0627">Porphyrin biosynthesis</keyword>
<keyword id="KW-1185">Reference proteome</keyword>
<proteinExistence type="inferred from homology"/>
<name>HEMH_SHIDS</name>
<sequence>MRQTKTGILLANLGTPDSPTPEAVKRYLKQFLSDRRVVDTSRLLWWPLLRGVILPLRSPRVAKLYASVWMEGGSPLMVYSRQQQQALAQRLPETPVALGMSYGSPSLESAVDELLAEHVDHIVVLPLYPQFSCSTVGAVWDELARILARKRSIPGISFIRDYADNHDYINALANSVRASFAKHGEPDLLLLSYHGIPQRYADEGDDYPQRCRTTTRELASALGMAPEKVMMTFQSRFGREPWLMPYTDETLKMLGEKGVGHIQVMCPGFAADCLETLEEIAEQNREVFLGAGGKKYEYIPALNATPEHIEMMANLVAAYR</sequence>
<organism>
    <name type="scientific">Shigella dysenteriae serotype 1 (strain Sd197)</name>
    <dbReference type="NCBI Taxonomy" id="300267"/>
    <lineage>
        <taxon>Bacteria</taxon>
        <taxon>Pseudomonadati</taxon>
        <taxon>Pseudomonadota</taxon>
        <taxon>Gammaproteobacteria</taxon>
        <taxon>Enterobacterales</taxon>
        <taxon>Enterobacteriaceae</taxon>
        <taxon>Shigella</taxon>
    </lineage>
</organism>
<gene>
    <name evidence="1" type="primary">hemH</name>
    <name type="ordered locus">SDY_0444</name>
</gene>
<reference key="1">
    <citation type="journal article" date="2005" name="Nucleic Acids Res.">
        <title>Genome dynamics and diversity of Shigella species, the etiologic agents of bacillary dysentery.</title>
        <authorList>
            <person name="Yang F."/>
            <person name="Yang J."/>
            <person name="Zhang X."/>
            <person name="Chen L."/>
            <person name="Jiang Y."/>
            <person name="Yan Y."/>
            <person name="Tang X."/>
            <person name="Wang J."/>
            <person name="Xiong Z."/>
            <person name="Dong J."/>
            <person name="Xue Y."/>
            <person name="Zhu Y."/>
            <person name="Xu X."/>
            <person name="Sun L."/>
            <person name="Chen S."/>
            <person name="Nie H."/>
            <person name="Peng J."/>
            <person name="Xu J."/>
            <person name="Wang Y."/>
            <person name="Yuan Z."/>
            <person name="Wen Y."/>
            <person name="Yao Z."/>
            <person name="Shen Y."/>
            <person name="Qiang B."/>
            <person name="Hou Y."/>
            <person name="Yu J."/>
            <person name="Jin Q."/>
        </authorList>
    </citation>
    <scope>NUCLEOTIDE SEQUENCE [LARGE SCALE GENOMIC DNA]</scope>
    <source>
        <strain>Sd197</strain>
    </source>
</reference>